<name>ASTE_ACIBS</name>
<sequence length="324" mass="36108">MQDFLALTLQGEQPATREGKQANFSWRWLGEGLLECTPHAQYDKAVVLSAGVHGNETAPIELLSHLCTDLFAGRLKLAVRLLLVLGNPYAMRQGKRYVHDDVNRMFCGGYKNLPVTEESKRAEVLEQTVATFFQESSSQAKRYHYDLHTAIRASLLPTFALFPYQTHSYDADLTASLEAADLDALVYHNAVGKTFTHFTSENFKAASATLELGKALPFGQNDLSQFASIDEVIRNVVSEQALPVRNKPKIRVFQVSDSLIKKDEEFHMNLSAEAPNFSTFTKGEIIATQPSGNYVVEQDQVWILFPNPNVKIGLRAGLVLTETI</sequence>
<accession>B0VQ89</accession>
<proteinExistence type="inferred from homology"/>
<comment type="function">
    <text evidence="1">Transforms N(2)-succinylglutamate into succinate and glutamate.</text>
</comment>
<comment type="catalytic activity">
    <reaction evidence="1">
        <text>N-succinyl-L-glutamate + H2O = L-glutamate + succinate</text>
        <dbReference type="Rhea" id="RHEA:15169"/>
        <dbReference type="ChEBI" id="CHEBI:15377"/>
        <dbReference type="ChEBI" id="CHEBI:29985"/>
        <dbReference type="ChEBI" id="CHEBI:30031"/>
        <dbReference type="ChEBI" id="CHEBI:58763"/>
        <dbReference type="EC" id="3.5.1.96"/>
    </reaction>
</comment>
<comment type="cofactor">
    <cofactor evidence="1">
        <name>Zn(2+)</name>
        <dbReference type="ChEBI" id="CHEBI:29105"/>
    </cofactor>
    <text evidence="1">Binds 1 zinc ion per subunit.</text>
</comment>
<comment type="pathway">
    <text evidence="1">Amino-acid degradation; L-arginine degradation via AST pathway; L-glutamate and succinate from L-arginine: step 5/5.</text>
</comment>
<comment type="similarity">
    <text evidence="1">Belongs to the AspA/AstE family. Succinylglutamate desuccinylase subfamily.</text>
</comment>
<gene>
    <name evidence="1" type="primary">astE</name>
    <name type="ordered locus">ABSDF0359</name>
</gene>
<evidence type="ECO:0000255" key="1">
    <source>
        <dbReference type="HAMAP-Rule" id="MF_00767"/>
    </source>
</evidence>
<organism>
    <name type="scientific">Acinetobacter baumannii (strain SDF)</name>
    <dbReference type="NCBI Taxonomy" id="509170"/>
    <lineage>
        <taxon>Bacteria</taxon>
        <taxon>Pseudomonadati</taxon>
        <taxon>Pseudomonadota</taxon>
        <taxon>Gammaproteobacteria</taxon>
        <taxon>Moraxellales</taxon>
        <taxon>Moraxellaceae</taxon>
        <taxon>Acinetobacter</taxon>
        <taxon>Acinetobacter calcoaceticus/baumannii complex</taxon>
    </lineage>
</organism>
<feature type="chain" id="PRO_1000133621" description="Succinylglutamate desuccinylase">
    <location>
        <begin position="1"/>
        <end position="324"/>
    </location>
</feature>
<feature type="active site" evidence="1">
    <location>
        <position position="211"/>
    </location>
</feature>
<feature type="binding site" evidence="1">
    <location>
        <position position="53"/>
    </location>
    <ligand>
        <name>Zn(2+)</name>
        <dbReference type="ChEBI" id="CHEBI:29105"/>
    </ligand>
</feature>
<feature type="binding site" evidence="1">
    <location>
        <position position="56"/>
    </location>
    <ligand>
        <name>Zn(2+)</name>
        <dbReference type="ChEBI" id="CHEBI:29105"/>
    </ligand>
</feature>
<feature type="binding site" evidence="1">
    <location>
        <position position="148"/>
    </location>
    <ligand>
        <name>Zn(2+)</name>
        <dbReference type="ChEBI" id="CHEBI:29105"/>
    </ligand>
</feature>
<protein>
    <recommendedName>
        <fullName evidence="1">Succinylglutamate desuccinylase</fullName>
        <ecNumber evidence="1">3.5.1.96</ecNumber>
    </recommendedName>
</protein>
<dbReference type="EC" id="3.5.1.96" evidence="1"/>
<dbReference type="EMBL" id="CU468230">
    <property type="protein sequence ID" value="CAO99753.1"/>
    <property type="molecule type" value="Genomic_DNA"/>
</dbReference>
<dbReference type="SMR" id="B0VQ89"/>
<dbReference type="KEGG" id="abm:ABSDF0359"/>
<dbReference type="HOGENOM" id="CLU_071608_0_0_6"/>
<dbReference type="UniPathway" id="UPA00185">
    <property type="reaction ID" value="UER00283"/>
</dbReference>
<dbReference type="Proteomes" id="UP000001741">
    <property type="component" value="Chromosome"/>
</dbReference>
<dbReference type="GO" id="GO:0016788">
    <property type="term" value="F:hydrolase activity, acting on ester bonds"/>
    <property type="evidence" value="ECO:0007669"/>
    <property type="project" value="UniProtKB-UniRule"/>
</dbReference>
<dbReference type="GO" id="GO:0009017">
    <property type="term" value="F:succinylglutamate desuccinylase activity"/>
    <property type="evidence" value="ECO:0007669"/>
    <property type="project" value="UniProtKB-EC"/>
</dbReference>
<dbReference type="GO" id="GO:0008270">
    <property type="term" value="F:zinc ion binding"/>
    <property type="evidence" value="ECO:0007669"/>
    <property type="project" value="UniProtKB-UniRule"/>
</dbReference>
<dbReference type="GO" id="GO:0019544">
    <property type="term" value="P:arginine catabolic process to glutamate"/>
    <property type="evidence" value="ECO:0007669"/>
    <property type="project" value="UniProtKB-UniRule"/>
</dbReference>
<dbReference type="GO" id="GO:0019545">
    <property type="term" value="P:arginine catabolic process to succinate"/>
    <property type="evidence" value="ECO:0007669"/>
    <property type="project" value="UniProtKB-UniRule"/>
</dbReference>
<dbReference type="CDD" id="cd03855">
    <property type="entry name" value="M14_ASTE"/>
    <property type="match status" value="1"/>
</dbReference>
<dbReference type="Gene3D" id="3.40.630.10">
    <property type="entry name" value="Zn peptidases"/>
    <property type="match status" value="1"/>
</dbReference>
<dbReference type="HAMAP" id="MF_00767">
    <property type="entry name" value="Arg_catab_AstE"/>
    <property type="match status" value="1"/>
</dbReference>
<dbReference type="InterPro" id="IPR050178">
    <property type="entry name" value="AspA/AstE_fam"/>
</dbReference>
<dbReference type="InterPro" id="IPR055438">
    <property type="entry name" value="AstE_AspA_cat"/>
</dbReference>
<dbReference type="InterPro" id="IPR007036">
    <property type="entry name" value="Aste_AspA_hybrid_dom"/>
</dbReference>
<dbReference type="InterPro" id="IPR016681">
    <property type="entry name" value="SuccinylGlu_desuccinylase"/>
</dbReference>
<dbReference type="NCBIfam" id="TIGR03242">
    <property type="entry name" value="arg_catab_astE"/>
    <property type="match status" value="1"/>
</dbReference>
<dbReference type="NCBIfam" id="NF003706">
    <property type="entry name" value="PRK05324.1"/>
    <property type="match status" value="1"/>
</dbReference>
<dbReference type="PANTHER" id="PTHR15162">
    <property type="entry name" value="ASPARTOACYLASE"/>
    <property type="match status" value="1"/>
</dbReference>
<dbReference type="PANTHER" id="PTHR15162:SF7">
    <property type="entry name" value="SUCCINYLGLUTAMATE DESUCCINYLASE"/>
    <property type="match status" value="1"/>
</dbReference>
<dbReference type="Pfam" id="PF24827">
    <property type="entry name" value="AstE_AspA_cat"/>
    <property type="match status" value="1"/>
</dbReference>
<dbReference type="Pfam" id="PF04952">
    <property type="entry name" value="AstE_AspA_hybrid"/>
    <property type="match status" value="1"/>
</dbReference>
<dbReference type="PIRSF" id="PIRSF017020">
    <property type="entry name" value="AstE"/>
    <property type="match status" value="1"/>
</dbReference>
<dbReference type="SUPFAM" id="SSF53187">
    <property type="entry name" value="Zn-dependent exopeptidases"/>
    <property type="match status" value="1"/>
</dbReference>
<keyword id="KW-0056">Arginine metabolism</keyword>
<keyword id="KW-0378">Hydrolase</keyword>
<keyword id="KW-0479">Metal-binding</keyword>
<keyword id="KW-0862">Zinc</keyword>
<reference key="1">
    <citation type="journal article" date="2008" name="PLoS ONE">
        <title>Comparative analysis of Acinetobacters: three genomes for three lifestyles.</title>
        <authorList>
            <person name="Vallenet D."/>
            <person name="Nordmann P."/>
            <person name="Barbe V."/>
            <person name="Poirel L."/>
            <person name="Mangenot S."/>
            <person name="Bataille E."/>
            <person name="Dossat C."/>
            <person name="Gas S."/>
            <person name="Kreimeyer A."/>
            <person name="Lenoble P."/>
            <person name="Oztas S."/>
            <person name="Poulain J."/>
            <person name="Segurens B."/>
            <person name="Robert C."/>
            <person name="Abergel C."/>
            <person name="Claverie J.-M."/>
            <person name="Raoult D."/>
            <person name="Medigue C."/>
            <person name="Weissenbach J."/>
            <person name="Cruveiller S."/>
        </authorList>
    </citation>
    <scope>NUCLEOTIDE SEQUENCE [LARGE SCALE GENOMIC DNA]</scope>
    <source>
        <strain>SDF</strain>
    </source>
</reference>